<protein>
    <recommendedName>
        <fullName>Putative transmembrane protein ORF66</fullName>
    </recommendedName>
</protein>
<accession>Q573F0</accession>
<gene>
    <name type="ORF">ORF66</name>
</gene>
<organism>
    <name type="scientific">Acidianus filamentous virus 2 (isolate Italy/Pozzuoli)</name>
    <name type="common">AFV-2</name>
    <dbReference type="NCBI Taxonomy" id="654910"/>
    <lineage>
        <taxon>Viruses</taxon>
        <taxon>Adnaviria</taxon>
        <taxon>Zilligvirae</taxon>
        <taxon>Taleaviricota</taxon>
        <taxon>Tokiviricetes</taxon>
        <taxon>Ligamenvirales</taxon>
        <taxon>Lipothrixviridae</taxon>
        <taxon>Deltalipothrixvirus</taxon>
        <taxon>Acidianus filamentous virus 2</taxon>
    </lineage>
</organism>
<evidence type="ECO:0000255" key="1"/>
<evidence type="ECO:0000305" key="2"/>
<name>Y066_AFV2P</name>
<dbReference type="EMBL" id="AJ854042">
    <property type="protein sequence ID" value="CAH69406.1"/>
    <property type="molecule type" value="Genomic_DNA"/>
</dbReference>
<dbReference type="RefSeq" id="YP_001496944.1">
    <property type="nucleotide sequence ID" value="NC_009884.1"/>
</dbReference>
<dbReference type="SMR" id="Q573F0"/>
<dbReference type="KEGG" id="vg:5656105"/>
<dbReference type="Proteomes" id="UP000006364">
    <property type="component" value="Genome"/>
</dbReference>
<dbReference type="GO" id="GO:0033644">
    <property type="term" value="C:host cell membrane"/>
    <property type="evidence" value="ECO:0007669"/>
    <property type="project" value="UniProtKB-SubCell"/>
</dbReference>
<dbReference type="GO" id="GO:0016020">
    <property type="term" value="C:membrane"/>
    <property type="evidence" value="ECO:0007669"/>
    <property type="project" value="UniProtKB-KW"/>
</dbReference>
<comment type="subcellular location">
    <subcellularLocation>
        <location evidence="2">Host membrane</location>
        <topology evidence="2">Multi-pass membrane protein</topology>
    </subcellularLocation>
</comment>
<keyword id="KW-1043">Host membrane</keyword>
<keyword id="KW-0472">Membrane</keyword>
<keyword id="KW-1185">Reference proteome</keyword>
<keyword id="KW-0812">Transmembrane</keyword>
<keyword id="KW-1133">Transmembrane helix</keyword>
<feature type="chain" id="PRO_0000384489" description="Putative transmembrane protein ORF66">
    <location>
        <begin position="1"/>
        <end position="66"/>
    </location>
</feature>
<feature type="topological domain" description="Cytoplasmic" evidence="1">
    <location>
        <begin position="1"/>
        <end position="6"/>
    </location>
</feature>
<feature type="transmembrane region" description="Helical" evidence="1">
    <location>
        <begin position="7"/>
        <end position="27"/>
    </location>
</feature>
<feature type="topological domain" description="Extracellular" evidence="1">
    <location>
        <begin position="28"/>
        <end position="39"/>
    </location>
</feature>
<feature type="transmembrane region" description="Helical" evidence="1">
    <location>
        <begin position="40"/>
        <end position="60"/>
    </location>
</feature>
<feature type="topological domain" description="Cytoplasmic" evidence="1">
    <location>
        <begin position="61"/>
        <end position="66"/>
    </location>
</feature>
<sequence>MSDVDDTIVDSIAIVGAILIGIFLIVVSVSNTSLFNNTEYDSMINSVLVIISSVIAYTLGKRRSKS</sequence>
<proteinExistence type="predicted"/>
<organismHost>
    <name type="scientific">Acidianus sp. F28</name>
    <dbReference type="NCBI Taxonomy" id="315458"/>
</organismHost>
<reference key="1">
    <citation type="journal article" date="2005" name="J. Bacteriol.">
        <title>Structure and genome organization of AFV2, a novel archaeal lipothrixvirus with unusual terminal and core structures.</title>
        <authorList>
            <person name="Haring M."/>
            <person name="Vestergaard G."/>
            <person name="Brugger K."/>
            <person name="Rachel R."/>
            <person name="Garrett R.A."/>
            <person name="Prangishvili D."/>
        </authorList>
    </citation>
    <scope>NUCLEOTIDE SEQUENCE [GENOMIC DNA]</scope>
</reference>